<proteinExistence type="evidence at protein level"/>
<feature type="chain" id="PRO_0000172000" description="Bacteriophytochrome">
    <location>
        <begin position="1"/>
        <end position="728"/>
    </location>
</feature>
<feature type="domain" description="GAF">
    <location>
        <begin position="139"/>
        <end position="303"/>
    </location>
</feature>
<feature type="domain" description="Histidine kinase" evidence="2">
    <location>
        <begin position="510"/>
        <end position="721"/>
    </location>
</feature>
<feature type="region of interest" description="Chromophore binding domain">
    <location>
        <begin position="17"/>
        <end position="495"/>
    </location>
</feature>
<feature type="binding site" description="covalent" evidence="1">
    <location>
        <position position="12"/>
    </location>
    <ligand>
        <name>a tetrapyrrole</name>
        <dbReference type="ChEBI" id="CHEBI:26932"/>
    </ligand>
</feature>
<feature type="modified residue" description="Phosphohistidine; by autocatalysis" evidence="2">
    <location>
        <position position="513"/>
    </location>
</feature>
<feature type="turn" evidence="5">
    <location>
        <begin position="9"/>
        <end position="11"/>
    </location>
</feature>
<feature type="helix" evidence="5">
    <location>
        <begin position="12"/>
        <end position="14"/>
    </location>
</feature>
<feature type="strand" evidence="5">
    <location>
        <begin position="21"/>
        <end position="23"/>
    </location>
</feature>
<feature type="strand" evidence="5">
    <location>
        <begin position="27"/>
        <end position="32"/>
    </location>
</feature>
<feature type="strand" evidence="5">
    <location>
        <begin position="36"/>
        <end position="42"/>
    </location>
</feature>
<feature type="helix" evidence="5">
    <location>
        <begin position="45"/>
        <end position="49"/>
    </location>
</feature>
<feature type="helix" evidence="5">
    <location>
        <begin position="61"/>
        <end position="76"/>
    </location>
</feature>
<feature type="strand" evidence="7">
    <location>
        <begin position="78"/>
        <end position="80"/>
    </location>
</feature>
<feature type="strand" evidence="5">
    <location>
        <begin position="85"/>
        <end position="88"/>
    </location>
</feature>
<feature type="strand" evidence="5">
    <location>
        <begin position="90"/>
        <end position="93"/>
    </location>
</feature>
<feature type="strand" evidence="5">
    <location>
        <begin position="95"/>
        <end position="102"/>
    </location>
</feature>
<feature type="strand" evidence="5">
    <location>
        <begin position="105"/>
        <end position="112"/>
    </location>
</feature>
<feature type="helix" evidence="5">
    <location>
        <begin position="121"/>
        <end position="136"/>
    </location>
</feature>
<feature type="helix" evidence="5">
    <location>
        <begin position="140"/>
        <end position="155"/>
    </location>
</feature>
<feature type="strand" evidence="5">
    <location>
        <begin position="158"/>
        <end position="165"/>
    </location>
</feature>
<feature type="turn" evidence="4">
    <location>
        <begin position="167"/>
        <end position="169"/>
    </location>
</feature>
<feature type="strand" evidence="5">
    <location>
        <begin position="171"/>
        <end position="178"/>
    </location>
</feature>
<feature type="helix" evidence="5">
    <location>
        <begin position="192"/>
        <end position="194"/>
    </location>
</feature>
<feature type="helix" evidence="5">
    <location>
        <begin position="197"/>
        <end position="205"/>
    </location>
</feature>
<feature type="strand" evidence="5">
    <location>
        <begin position="207"/>
        <end position="212"/>
    </location>
</feature>
<feature type="strand" evidence="5">
    <location>
        <begin position="219"/>
        <end position="225"/>
    </location>
</feature>
<feature type="turn" evidence="5">
    <location>
        <begin position="227"/>
        <end position="229"/>
    </location>
</feature>
<feature type="strand" evidence="5">
    <location>
        <begin position="230"/>
        <end position="232"/>
    </location>
</feature>
<feature type="helix" evidence="4">
    <location>
        <begin position="235"/>
        <end position="237"/>
    </location>
</feature>
<feature type="strand" evidence="4">
    <location>
        <begin position="239"/>
        <end position="241"/>
    </location>
</feature>
<feature type="helix" evidence="5">
    <location>
        <begin position="245"/>
        <end position="254"/>
    </location>
</feature>
<feature type="strand" evidence="5">
    <location>
        <begin position="258"/>
        <end position="265"/>
    </location>
</feature>
<feature type="strand" evidence="5">
    <location>
        <begin position="267"/>
        <end position="280"/>
    </location>
</feature>
<feature type="helix" evidence="5">
    <location>
        <begin position="286"/>
        <end position="332"/>
    </location>
</feature>
<feature type="helix" evidence="5">
    <location>
        <begin position="335"/>
        <end position="340"/>
    </location>
</feature>
<feature type="turn" evidence="5">
    <location>
        <begin position="342"/>
        <end position="344"/>
    </location>
</feature>
<feature type="helix" evidence="5">
    <location>
        <begin position="346"/>
        <end position="349"/>
    </location>
</feature>
<feature type="strand" evidence="5">
    <location>
        <begin position="353"/>
        <end position="359"/>
    </location>
</feature>
<feature type="strand" evidence="5">
    <location>
        <begin position="362"/>
        <end position="368"/>
    </location>
</feature>
<feature type="helix" evidence="5">
    <location>
        <begin position="371"/>
        <end position="382"/>
    </location>
</feature>
<feature type="strand" evidence="5">
    <location>
        <begin position="388"/>
        <end position="393"/>
    </location>
</feature>
<feature type="strand" evidence="7">
    <location>
        <begin position="402"/>
        <end position="404"/>
    </location>
</feature>
<feature type="strand" evidence="5">
    <location>
        <begin position="410"/>
        <end position="417"/>
    </location>
</feature>
<feature type="turn" evidence="5">
    <location>
        <begin position="418"/>
        <end position="421"/>
    </location>
</feature>
<feature type="strand" evidence="5">
    <location>
        <begin position="422"/>
        <end position="428"/>
    </location>
</feature>
<feature type="strand" evidence="5">
    <location>
        <begin position="434"/>
        <end position="440"/>
    </location>
</feature>
<feature type="strand" evidence="6">
    <location>
        <begin position="446"/>
        <end position="448"/>
    </location>
</feature>
<feature type="helix" evidence="5">
    <location>
        <begin position="452"/>
        <end position="454"/>
    </location>
</feature>
<feature type="helix" evidence="5">
    <location>
        <begin position="456"/>
        <end position="467"/>
    </location>
</feature>
<feature type="helix" evidence="5">
    <location>
        <begin position="476"/>
        <end position="493"/>
    </location>
</feature>
<feature type="helix" evidence="6">
    <location>
        <begin position="499"/>
        <end position="528"/>
    </location>
</feature>
<feature type="helix" evidence="6">
    <location>
        <begin position="534"/>
        <end position="564"/>
    </location>
</feature>
<feature type="strand" evidence="6">
    <location>
        <begin position="574"/>
        <end position="577"/>
    </location>
</feature>
<feature type="helix" evidence="6">
    <location>
        <begin position="578"/>
        <end position="592"/>
    </location>
</feature>
<feature type="strand" evidence="6">
    <location>
        <begin position="598"/>
        <end position="602"/>
    </location>
</feature>
<feature type="strand" evidence="6">
    <location>
        <begin position="607"/>
        <end position="610"/>
    </location>
</feature>
<feature type="helix" evidence="6">
    <location>
        <begin position="612"/>
        <end position="629"/>
    </location>
</feature>
<feature type="strand" evidence="6">
    <location>
        <begin position="636"/>
        <end position="643"/>
    </location>
</feature>
<feature type="strand" evidence="6">
    <location>
        <begin position="646"/>
        <end position="656"/>
    </location>
</feature>
<feature type="helix" evidence="6">
    <location>
        <begin position="660"/>
        <end position="665"/>
    </location>
</feature>
<feature type="helix" evidence="6">
    <location>
        <begin position="672"/>
        <end position="676"/>
    </location>
</feature>
<feature type="helix" evidence="6">
    <location>
        <begin position="686"/>
        <end position="697"/>
    </location>
</feature>
<feature type="strand" evidence="6">
    <location>
        <begin position="701"/>
        <end position="707"/>
    </location>
</feature>
<feature type="strand" evidence="6">
    <location>
        <begin position="710"/>
        <end position="718"/>
    </location>
</feature>
<name>BPHY_PSEAE</name>
<comment type="function">
    <text evidence="1">Photoreceptor which exists in two forms that are reversibly interconvertible by light: the R form that absorbs maximally in the red region of the spectrum and the FR form that absorbs maximally in the far-red region.</text>
</comment>
<comment type="catalytic activity">
    <reaction>
        <text>ATP + protein L-histidine = ADP + protein N-phospho-L-histidine.</text>
        <dbReference type="EC" id="2.7.13.3"/>
    </reaction>
</comment>
<comment type="interaction">
    <interactant intactId="EBI-15729881">
        <id>Q9HWR3</id>
    </interactant>
    <interactant intactId="EBI-15729881">
        <id>Q9HWR3</id>
        <label>bphP</label>
    </interactant>
    <organismsDiffer>false</organismsDiffer>
    <experiments>4</experiments>
</comment>
<comment type="PTM">
    <text evidence="1">Contains one covalently linked tetrapyrrole chromophore.</text>
</comment>
<comment type="similarity">
    <text evidence="3">In the N-terminal section; belongs to the phytochrome family.</text>
</comment>
<evidence type="ECO:0000250" key="1"/>
<evidence type="ECO:0000255" key="2">
    <source>
        <dbReference type="PROSITE-ProRule" id="PRU00107"/>
    </source>
</evidence>
<evidence type="ECO:0000305" key="3"/>
<evidence type="ECO:0007829" key="4">
    <source>
        <dbReference type="PDB" id="3G6O"/>
    </source>
</evidence>
<evidence type="ECO:0007829" key="5">
    <source>
        <dbReference type="PDB" id="3NHQ"/>
    </source>
</evidence>
<evidence type="ECO:0007829" key="6">
    <source>
        <dbReference type="PDB" id="9EUT"/>
    </source>
</evidence>
<evidence type="ECO:0007829" key="7">
    <source>
        <dbReference type="PDB" id="9EUY"/>
    </source>
</evidence>
<keyword id="KW-0002">3D-structure</keyword>
<keyword id="KW-0067">ATP-binding</keyword>
<keyword id="KW-0157">Chromophore</keyword>
<keyword id="KW-0418">Kinase</keyword>
<keyword id="KW-0547">Nucleotide-binding</keyword>
<keyword id="KW-0597">Phosphoprotein</keyword>
<keyword id="KW-0600">Photoreceptor protein</keyword>
<keyword id="KW-0675">Receptor</keyword>
<keyword id="KW-1185">Reference proteome</keyword>
<keyword id="KW-0716">Sensory transduction</keyword>
<keyword id="KW-0808">Transferase</keyword>
<protein>
    <recommendedName>
        <fullName>Bacteriophytochrome</fullName>
        <ecNumber>2.7.13.3</ecNumber>
    </recommendedName>
    <alternativeName>
        <fullName>Phytochrome-like protein</fullName>
    </alternativeName>
</protein>
<organism>
    <name type="scientific">Pseudomonas aeruginosa (strain ATCC 15692 / DSM 22644 / CIP 104116 / JCM 14847 / LMG 12228 / 1C / PRS 101 / PAO1)</name>
    <dbReference type="NCBI Taxonomy" id="208964"/>
    <lineage>
        <taxon>Bacteria</taxon>
        <taxon>Pseudomonadati</taxon>
        <taxon>Pseudomonadota</taxon>
        <taxon>Gammaproteobacteria</taxon>
        <taxon>Pseudomonadales</taxon>
        <taxon>Pseudomonadaceae</taxon>
        <taxon>Pseudomonas</taxon>
    </lineage>
</organism>
<gene>
    <name type="primary">bphP</name>
    <name type="ordered locus">PA4117</name>
</gene>
<dbReference type="EC" id="2.7.13.3"/>
<dbReference type="EMBL" id="AE004091">
    <property type="protein sequence ID" value="AAG07504.1"/>
    <property type="molecule type" value="Genomic_DNA"/>
</dbReference>
<dbReference type="PIR" id="B83131">
    <property type="entry name" value="B83131"/>
</dbReference>
<dbReference type="RefSeq" id="NP_252806.1">
    <property type="nucleotide sequence ID" value="NC_002516.2"/>
</dbReference>
<dbReference type="RefSeq" id="WP_003101278.1">
    <property type="nucleotide sequence ID" value="NZ_QZGE01000013.1"/>
</dbReference>
<dbReference type="PDB" id="3C2W">
    <property type="method" value="X-ray"/>
    <property type="resolution" value="2.90 A"/>
    <property type="chains" value="A/B/C/D/E/F/G/H=1-497"/>
</dbReference>
<dbReference type="PDB" id="3G6O">
    <property type="method" value="X-ray"/>
    <property type="resolution" value="2.85 A"/>
    <property type="chains" value="A/B=1-497"/>
</dbReference>
<dbReference type="PDB" id="3IBR">
    <property type="method" value="X-ray"/>
    <property type="resolution" value="2.97 A"/>
    <property type="chains" value="A/B=1-497"/>
</dbReference>
<dbReference type="PDB" id="3NHQ">
    <property type="method" value="X-ray"/>
    <property type="resolution" value="2.55 A"/>
    <property type="chains" value="A/B/C/D/E/F/G/H=1-497"/>
</dbReference>
<dbReference type="PDB" id="3NOP">
    <property type="method" value="X-ray"/>
    <property type="resolution" value="2.80 A"/>
    <property type="chains" value="C=1-497"/>
</dbReference>
<dbReference type="PDB" id="3NOT">
    <property type="method" value="X-ray"/>
    <property type="resolution" value="2.70 A"/>
    <property type="chains" value="C=1-497"/>
</dbReference>
<dbReference type="PDB" id="3NOU">
    <property type="method" value="X-ray"/>
    <property type="resolution" value="3.00 A"/>
    <property type="chains" value="C=1-497"/>
</dbReference>
<dbReference type="PDB" id="9EUT">
    <property type="method" value="EM"/>
    <property type="resolution" value="2.95 A"/>
    <property type="chains" value="A/B=1-728"/>
</dbReference>
<dbReference type="PDB" id="9EUY">
    <property type="method" value="EM"/>
    <property type="resolution" value="2.95 A"/>
    <property type="chains" value="A/B=1-728"/>
</dbReference>
<dbReference type="PDBsum" id="3C2W"/>
<dbReference type="PDBsum" id="3G6O"/>
<dbReference type="PDBsum" id="3IBR"/>
<dbReference type="PDBsum" id="3NHQ"/>
<dbReference type="PDBsum" id="3NOP"/>
<dbReference type="PDBsum" id="3NOT"/>
<dbReference type="PDBsum" id="3NOU"/>
<dbReference type="PDBsum" id="9EUT"/>
<dbReference type="PDBsum" id="9EUY"/>
<dbReference type="EMDB" id="EMD-19981"/>
<dbReference type="EMDB" id="EMD-19989"/>
<dbReference type="SMR" id="Q9HWR3"/>
<dbReference type="DIP" id="DIP-46175N"/>
<dbReference type="STRING" id="208964.PA4117"/>
<dbReference type="PaxDb" id="208964-PA4117"/>
<dbReference type="GeneID" id="880365"/>
<dbReference type="KEGG" id="pae:PA4117"/>
<dbReference type="PATRIC" id="fig|208964.12.peg.4314"/>
<dbReference type="PseudoCAP" id="PA4117"/>
<dbReference type="HOGENOM" id="CLU_000445_50_1_6"/>
<dbReference type="InParanoid" id="Q9HWR3"/>
<dbReference type="OrthoDB" id="9808408at2"/>
<dbReference type="PhylomeDB" id="Q9HWR3"/>
<dbReference type="BioCyc" id="PAER208964:G1FZ6-4190-MONOMER"/>
<dbReference type="BRENDA" id="2.7.13.3">
    <property type="organism ID" value="5087"/>
</dbReference>
<dbReference type="EvolutionaryTrace" id="Q9HWR3"/>
<dbReference type="Proteomes" id="UP000002438">
    <property type="component" value="Chromosome"/>
</dbReference>
<dbReference type="GO" id="GO:0005524">
    <property type="term" value="F:ATP binding"/>
    <property type="evidence" value="ECO:0007669"/>
    <property type="project" value="UniProtKB-KW"/>
</dbReference>
<dbReference type="GO" id="GO:0042802">
    <property type="term" value="F:identical protein binding"/>
    <property type="evidence" value="ECO:0000353"/>
    <property type="project" value="IntAct"/>
</dbReference>
<dbReference type="GO" id="GO:0000156">
    <property type="term" value="F:phosphorelay response regulator activity"/>
    <property type="evidence" value="ECO:0000318"/>
    <property type="project" value="GO_Central"/>
</dbReference>
<dbReference type="GO" id="GO:0000155">
    <property type="term" value="F:phosphorelay sensor kinase activity"/>
    <property type="evidence" value="ECO:0007669"/>
    <property type="project" value="InterPro"/>
</dbReference>
<dbReference type="GO" id="GO:0009881">
    <property type="term" value="F:photoreceptor activity"/>
    <property type="evidence" value="ECO:0007669"/>
    <property type="project" value="UniProtKB-KW"/>
</dbReference>
<dbReference type="GO" id="GO:0030295">
    <property type="term" value="F:protein kinase activator activity"/>
    <property type="evidence" value="ECO:0000318"/>
    <property type="project" value="GO_Central"/>
</dbReference>
<dbReference type="GO" id="GO:0009584">
    <property type="term" value="P:detection of visible light"/>
    <property type="evidence" value="ECO:0007669"/>
    <property type="project" value="InterPro"/>
</dbReference>
<dbReference type="GO" id="GO:0007234">
    <property type="term" value="P:osmosensory signaling via phosphorelay pathway"/>
    <property type="evidence" value="ECO:0000318"/>
    <property type="project" value="GO_Central"/>
</dbReference>
<dbReference type="GO" id="GO:0006355">
    <property type="term" value="P:regulation of DNA-templated transcription"/>
    <property type="evidence" value="ECO:0007669"/>
    <property type="project" value="InterPro"/>
</dbReference>
<dbReference type="CDD" id="cd00082">
    <property type="entry name" value="HisKA"/>
    <property type="match status" value="1"/>
</dbReference>
<dbReference type="Gene3D" id="1.10.287.130">
    <property type="match status" value="1"/>
</dbReference>
<dbReference type="Gene3D" id="3.30.450.270">
    <property type="match status" value="1"/>
</dbReference>
<dbReference type="Gene3D" id="3.30.450.40">
    <property type="match status" value="1"/>
</dbReference>
<dbReference type="Gene3D" id="3.30.565.10">
    <property type="entry name" value="Histidine kinase-like ATPase, C-terminal domain"/>
    <property type="match status" value="1"/>
</dbReference>
<dbReference type="Gene3D" id="3.30.450.20">
    <property type="entry name" value="PAS domain"/>
    <property type="match status" value="1"/>
</dbReference>
<dbReference type="InterPro" id="IPR003018">
    <property type="entry name" value="GAF"/>
</dbReference>
<dbReference type="InterPro" id="IPR029016">
    <property type="entry name" value="GAF-like_dom_sf"/>
</dbReference>
<dbReference type="InterPro" id="IPR036890">
    <property type="entry name" value="HATPase_C_sf"/>
</dbReference>
<dbReference type="InterPro" id="IPR005467">
    <property type="entry name" value="His_kinase_dom"/>
</dbReference>
<dbReference type="InterPro" id="IPR003661">
    <property type="entry name" value="HisK_dim/P_dom"/>
</dbReference>
<dbReference type="InterPro" id="IPR036097">
    <property type="entry name" value="HisK_dim/P_sf"/>
</dbReference>
<dbReference type="InterPro" id="IPR052545">
    <property type="entry name" value="Light-responsive_reg"/>
</dbReference>
<dbReference type="InterPro" id="IPR035965">
    <property type="entry name" value="PAS-like_dom_sf"/>
</dbReference>
<dbReference type="InterPro" id="IPR013654">
    <property type="entry name" value="PAS_2"/>
</dbReference>
<dbReference type="InterPro" id="IPR016132">
    <property type="entry name" value="Phyto_chromo_attachment"/>
</dbReference>
<dbReference type="InterPro" id="IPR001294">
    <property type="entry name" value="Phytochrome"/>
</dbReference>
<dbReference type="InterPro" id="IPR013515">
    <property type="entry name" value="Phytochrome_cen-reg"/>
</dbReference>
<dbReference type="InterPro" id="IPR043150">
    <property type="entry name" value="Phytochrome_PHY_sf"/>
</dbReference>
<dbReference type="PANTHER" id="PTHR42878:SF15">
    <property type="entry name" value="BACTERIOPHYTOCHROME"/>
    <property type="match status" value="1"/>
</dbReference>
<dbReference type="PANTHER" id="PTHR42878">
    <property type="entry name" value="TWO-COMPONENT HISTIDINE KINASE"/>
    <property type="match status" value="1"/>
</dbReference>
<dbReference type="Pfam" id="PF01590">
    <property type="entry name" value="GAF"/>
    <property type="match status" value="1"/>
</dbReference>
<dbReference type="Pfam" id="PF02518">
    <property type="entry name" value="HATPase_c"/>
    <property type="match status" value="1"/>
</dbReference>
<dbReference type="Pfam" id="PF00512">
    <property type="entry name" value="HisKA"/>
    <property type="match status" value="1"/>
</dbReference>
<dbReference type="Pfam" id="PF08446">
    <property type="entry name" value="PAS_2"/>
    <property type="match status" value="1"/>
</dbReference>
<dbReference type="Pfam" id="PF00360">
    <property type="entry name" value="PHY"/>
    <property type="match status" value="1"/>
</dbReference>
<dbReference type="PRINTS" id="PR01033">
    <property type="entry name" value="PHYTOCHROME"/>
</dbReference>
<dbReference type="SMART" id="SM00065">
    <property type="entry name" value="GAF"/>
    <property type="match status" value="1"/>
</dbReference>
<dbReference type="SMART" id="SM00387">
    <property type="entry name" value="HATPase_c"/>
    <property type="match status" value="1"/>
</dbReference>
<dbReference type="SMART" id="SM00388">
    <property type="entry name" value="HisKA"/>
    <property type="match status" value="1"/>
</dbReference>
<dbReference type="SUPFAM" id="SSF55874">
    <property type="entry name" value="ATPase domain of HSP90 chaperone/DNA topoisomerase II/histidine kinase"/>
    <property type="match status" value="1"/>
</dbReference>
<dbReference type="SUPFAM" id="SSF55781">
    <property type="entry name" value="GAF domain-like"/>
    <property type="match status" value="2"/>
</dbReference>
<dbReference type="SUPFAM" id="SSF47384">
    <property type="entry name" value="Homodimeric domain of signal transducing histidine kinase"/>
    <property type="match status" value="1"/>
</dbReference>
<dbReference type="SUPFAM" id="SSF55785">
    <property type="entry name" value="PYP-like sensor domain (PAS domain)"/>
    <property type="match status" value="1"/>
</dbReference>
<dbReference type="PROSITE" id="PS50109">
    <property type="entry name" value="HIS_KIN"/>
    <property type="match status" value="1"/>
</dbReference>
<dbReference type="PROSITE" id="PS50046">
    <property type="entry name" value="PHYTOCHROME_2"/>
    <property type="match status" value="1"/>
</dbReference>
<reference key="1">
    <citation type="journal article" date="2000" name="Nature">
        <title>Complete genome sequence of Pseudomonas aeruginosa PAO1, an opportunistic pathogen.</title>
        <authorList>
            <person name="Stover C.K."/>
            <person name="Pham X.-Q.T."/>
            <person name="Erwin A.L."/>
            <person name="Mizoguchi S.D."/>
            <person name="Warrener P."/>
            <person name="Hickey M.J."/>
            <person name="Brinkman F.S.L."/>
            <person name="Hufnagle W.O."/>
            <person name="Kowalik D.J."/>
            <person name="Lagrou M."/>
            <person name="Garber R.L."/>
            <person name="Goltry L."/>
            <person name="Tolentino E."/>
            <person name="Westbrock-Wadman S."/>
            <person name="Yuan Y."/>
            <person name="Brody L.L."/>
            <person name="Coulter S.N."/>
            <person name="Folger K.R."/>
            <person name="Kas A."/>
            <person name="Larbig K."/>
            <person name="Lim R.M."/>
            <person name="Smith K.A."/>
            <person name="Spencer D.H."/>
            <person name="Wong G.K.-S."/>
            <person name="Wu Z."/>
            <person name="Paulsen I.T."/>
            <person name="Reizer J."/>
            <person name="Saier M.H. Jr."/>
            <person name="Hancock R.E.W."/>
            <person name="Lory S."/>
            <person name="Olson M.V."/>
        </authorList>
    </citation>
    <scope>NUCLEOTIDE SEQUENCE [LARGE SCALE GENOMIC DNA]</scope>
    <source>
        <strain>ATCC 15692 / DSM 22644 / CIP 104116 / JCM 14847 / LMG 12228 / 1C / PRS 101 / PAO1</strain>
    </source>
</reference>
<sequence length="728" mass="80931">MTSITPVTLANCEDEPIHVPGAIQPHGALVTLRADGMVLAASENIQALLGFVASPGSYLTQEQVGPEVLRMLEEGLTGNGPWSNSVETRIGEHLFDVIGHSYKEVFYLEFEIRTADTLSITSFTLNAQRIIAQVQLHNDTASLLSNVTDELRRMTGYDRVMAYRFRHDDSGEVVAESRREDLESYLGQRYPASDIPAQARRLYIQNPIRLIADVAYTPMRVFPALNPETNESFDLSYSVLRSVSPIHCEYLTNMGVRASMSISIVVGGKLWGLFSCHHMSPKLIPYPVRMSFQIFSQVCSAIVERLEQGRIAELLRVSTERRLALARRARDADDLFGALAHPDDGIAALIPCDGALVMLGGRTLSIRGDFERQAGNVLQRLQRDPERDIYHTDNWPQPSEDSPDGGDCCGVLAIRFHRQESGWIFWFRHEEVHRIRWGGKPEKLLTIGPSGPRLTPRGSFEAWEEVVRGHSTPWSETDLAIAEKLRLDLMELCLNHAAEVDRMRQRLIAVLGHDLRNPLQSISMAAALLSSSDTRTTELRQHISASSSRMERLVSQILDMSRLQSGIGLTVNPVDTDVSQLVRQIVCETDVAYPGLVIEIAIDPQVRAVVDPDRYAQVAANLLSNARHHGLPGRPVLVTLTRQGDEVCLSVLNETSGLSEAQLANLFEPFKRESADNQRNRNGLGIGLYISQAIAQAHQGRIDVDCRDDVITFCLRLPVRQAETGSSS</sequence>
<accession>Q9HWR3</accession>